<sequence length="764" mass="80876">MTQTSERKSSAVEVEPGVFESVALIDNGSYGTRTVRFETGRLARQAAGSVVAYLDDETMLLSATTAGKTPKDQFDFFPLTVDVEERMYAAGRIPGSFFRREGRPSTDAILTCRLIDRPLRPSFVDGLRNEVQVVVTVLSLDPKDLYDVVAINAASASTQIAGLPFSGPVGGVRVALIPDQGANSAGGGQWVAFPTVEQLEGAVFDMVVAGRVVESGDVAIMMVEAEATEKVIELVEGGAQAPTEAVVAEGLEAAKPFIARLCRAQQDLAELAAKPTEEFPLFPPYGPDVYEAVEGAAEAELGEALSIAGKQEREEKIDEIKLAVLDRLAEQFAGREKELGAAFRSVTKKLVRQRILTDGFRIDGRGLADIRALSAEVAVVPRAHGSALFERGETQILGVTTLDMVKMAQQVDSLGPETSKRYMHHYNFPPFSTGETGRVGSPKRREIGHGALAERALIPVLPSQEDFPYAIRQVSEALGSNGSTSMGSVCASTLSLLNAGVPLKAPVAGIAMGLVSDTVTNDKGEQEVRYVALTDILGAEDAFGDMDFKVAGTREFVTALQLDTKLDGIPSQVLAGALSQAHDARTTILDVMAEAIATPDEMSPYAPRVTAIKIPVDKIGEVIGPKGKVINQITEDTGANISIEDDGTVFVGATDGPSAQAAIDAINAIANPQLPKVGERFLGTVVKTTAFGAFVSLLPGRDGLVHISKLGNGKRVAKVEDVVNVGDKLRVEIADIDNRGKISLVPVDENADEPAADAVDAGTE</sequence>
<evidence type="ECO:0000255" key="1">
    <source>
        <dbReference type="HAMAP-Rule" id="MF_01595"/>
    </source>
</evidence>
<protein>
    <recommendedName>
        <fullName evidence="1">Polyribonucleotide nucleotidyltransferase</fullName>
        <ecNumber evidence="1">2.7.7.8</ecNumber>
    </recommendedName>
    <alternativeName>
        <fullName evidence="1">Polynucleotide phosphorylase</fullName>
        <shortName evidence="1">PNPase</shortName>
    </alternativeName>
</protein>
<name>PNP_NOCFA</name>
<comment type="function">
    <text evidence="1">Involved in mRNA degradation. Catalyzes the phosphorolysis of single-stranded polyribonucleotides processively in the 3'- to 5'-direction.</text>
</comment>
<comment type="catalytic activity">
    <reaction evidence="1">
        <text>RNA(n+1) + phosphate = RNA(n) + a ribonucleoside 5'-diphosphate</text>
        <dbReference type="Rhea" id="RHEA:22096"/>
        <dbReference type="Rhea" id="RHEA-COMP:14527"/>
        <dbReference type="Rhea" id="RHEA-COMP:17342"/>
        <dbReference type="ChEBI" id="CHEBI:43474"/>
        <dbReference type="ChEBI" id="CHEBI:57930"/>
        <dbReference type="ChEBI" id="CHEBI:140395"/>
        <dbReference type="EC" id="2.7.7.8"/>
    </reaction>
</comment>
<comment type="cofactor">
    <cofactor evidence="1">
        <name>Mg(2+)</name>
        <dbReference type="ChEBI" id="CHEBI:18420"/>
    </cofactor>
</comment>
<comment type="subcellular location">
    <subcellularLocation>
        <location evidence="1">Cytoplasm</location>
    </subcellularLocation>
</comment>
<comment type="similarity">
    <text evidence="1">Belongs to the polyribonucleotide nucleotidyltransferase family.</text>
</comment>
<keyword id="KW-0963">Cytoplasm</keyword>
<keyword id="KW-0460">Magnesium</keyword>
<keyword id="KW-0479">Metal-binding</keyword>
<keyword id="KW-0548">Nucleotidyltransferase</keyword>
<keyword id="KW-1185">Reference proteome</keyword>
<keyword id="KW-0694">RNA-binding</keyword>
<keyword id="KW-0808">Transferase</keyword>
<proteinExistence type="inferred from homology"/>
<reference key="1">
    <citation type="journal article" date="2004" name="Proc. Natl. Acad. Sci. U.S.A.">
        <title>The complete genomic sequence of Nocardia farcinica IFM 10152.</title>
        <authorList>
            <person name="Ishikawa J."/>
            <person name="Yamashita A."/>
            <person name="Mikami Y."/>
            <person name="Hoshino Y."/>
            <person name="Kurita H."/>
            <person name="Hotta K."/>
            <person name="Shiba T."/>
            <person name="Hattori M."/>
        </authorList>
    </citation>
    <scope>NUCLEOTIDE SEQUENCE [LARGE SCALE GENOMIC DNA]</scope>
    <source>
        <strain>IFM 10152</strain>
    </source>
</reference>
<accession>Q5YSV6</accession>
<dbReference type="EC" id="2.7.7.8" evidence="1"/>
<dbReference type="EMBL" id="AP006618">
    <property type="protein sequence ID" value="BAD58735.1"/>
    <property type="molecule type" value="Genomic_DNA"/>
</dbReference>
<dbReference type="RefSeq" id="WP_011210420.1">
    <property type="nucleotide sequence ID" value="NC_006361.1"/>
</dbReference>
<dbReference type="SMR" id="Q5YSV6"/>
<dbReference type="STRING" id="247156.NFA_38870"/>
<dbReference type="GeneID" id="61134572"/>
<dbReference type="KEGG" id="nfa:NFA_38870"/>
<dbReference type="eggNOG" id="COG1185">
    <property type="taxonomic scope" value="Bacteria"/>
</dbReference>
<dbReference type="HOGENOM" id="CLU_004217_2_2_11"/>
<dbReference type="OrthoDB" id="9804305at2"/>
<dbReference type="Proteomes" id="UP000006820">
    <property type="component" value="Chromosome"/>
</dbReference>
<dbReference type="GO" id="GO:0005829">
    <property type="term" value="C:cytosol"/>
    <property type="evidence" value="ECO:0007669"/>
    <property type="project" value="TreeGrafter"/>
</dbReference>
<dbReference type="GO" id="GO:0000175">
    <property type="term" value="F:3'-5'-RNA exonuclease activity"/>
    <property type="evidence" value="ECO:0007669"/>
    <property type="project" value="TreeGrafter"/>
</dbReference>
<dbReference type="GO" id="GO:0000287">
    <property type="term" value="F:magnesium ion binding"/>
    <property type="evidence" value="ECO:0007669"/>
    <property type="project" value="UniProtKB-UniRule"/>
</dbReference>
<dbReference type="GO" id="GO:0004654">
    <property type="term" value="F:polyribonucleotide nucleotidyltransferase activity"/>
    <property type="evidence" value="ECO:0007669"/>
    <property type="project" value="UniProtKB-UniRule"/>
</dbReference>
<dbReference type="GO" id="GO:0003723">
    <property type="term" value="F:RNA binding"/>
    <property type="evidence" value="ECO:0007669"/>
    <property type="project" value="UniProtKB-UniRule"/>
</dbReference>
<dbReference type="GO" id="GO:0006402">
    <property type="term" value="P:mRNA catabolic process"/>
    <property type="evidence" value="ECO:0007669"/>
    <property type="project" value="UniProtKB-UniRule"/>
</dbReference>
<dbReference type="GO" id="GO:0006396">
    <property type="term" value="P:RNA processing"/>
    <property type="evidence" value="ECO:0007669"/>
    <property type="project" value="InterPro"/>
</dbReference>
<dbReference type="CDD" id="cd02393">
    <property type="entry name" value="KH-I_PNPase"/>
    <property type="match status" value="1"/>
</dbReference>
<dbReference type="CDD" id="cd11364">
    <property type="entry name" value="RNase_PH_PNPase_2"/>
    <property type="match status" value="1"/>
</dbReference>
<dbReference type="CDD" id="cd04472">
    <property type="entry name" value="S1_PNPase"/>
    <property type="match status" value="1"/>
</dbReference>
<dbReference type="FunFam" id="2.40.50.140:FF:000069">
    <property type="entry name" value="Polyribonucleotide nucleotidyltransferase"/>
    <property type="match status" value="1"/>
</dbReference>
<dbReference type="FunFam" id="3.30.1370.10:FF:000001">
    <property type="entry name" value="Polyribonucleotide nucleotidyltransferase"/>
    <property type="match status" value="1"/>
</dbReference>
<dbReference type="FunFam" id="3.30.230.70:FF:000001">
    <property type="entry name" value="Polyribonucleotide nucleotidyltransferase"/>
    <property type="match status" value="1"/>
</dbReference>
<dbReference type="FunFam" id="3.30.230.70:FF:000002">
    <property type="entry name" value="Polyribonucleotide nucleotidyltransferase"/>
    <property type="match status" value="1"/>
</dbReference>
<dbReference type="Gene3D" id="3.30.230.70">
    <property type="entry name" value="GHMP Kinase, N-terminal domain"/>
    <property type="match status" value="2"/>
</dbReference>
<dbReference type="Gene3D" id="3.30.1370.10">
    <property type="entry name" value="K Homology domain, type 1"/>
    <property type="match status" value="1"/>
</dbReference>
<dbReference type="Gene3D" id="2.40.50.140">
    <property type="entry name" value="Nucleic acid-binding proteins"/>
    <property type="match status" value="1"/>
</dbReference>
<dbReference type="HAMAP" id="MF_01595">
    <property type="entry name" value="PNPase"/>
    <property type="match status" value="1"/>
</dbReference>
<dbReference type="InterPro" id="IPR001247">
    <property type="entry name" value="ExoRNase_PH_dom1"/>
</dbReference>
<dbReference type="InterPro" id="IPR036345">
    <property type="entry name" value="ExoRNase_PH_dom2_sf"/>
</dbReference>
<dbReference type="InterPro" id="IPR014069">
    <property type="entry name" value="GPSI/PNP"/>
</dbReference>
<dbReference type="InterPro" id="IPR004087">
    <property type="entry name" value="KH_dom"/>
</dbReference>
<dbReference type="InterPro" id="IPR004088">
    <property type="entry name" value="KH_dom_type_1"/>
</dbReference>
<dbReference type="InterPro" id="IPR036612">
    <property type="entry name" value="KH_dom_type_1_sf"/>
</dbReference>
<dbReference type="InterPro" id="IPR012340">
    <property type="entry name" value="NA-bd_OB-fold"/>
</dbReference>
<dbReference type="InterPro" id="IPR012162">
    <property type="entry name" value="PNPase"/>
</dbReference>
<dbReference type="InterPro" id="IPR027408">
    <property type="entry name" value="PNPase/RNase_PH_dom_sf"/>
</dbReference>
<dbReference type="InterPro" id="IPR015848">
    <property type="entry name" value="PNPase_PH_RNA-bd_bac/org-type"/>
</dbReference>
<dbReference type="InterPro" id="IPR036456">
    <property type="entry name" value="PNPase_PH_RNA-bd_sf"/>
</dbReference>
<dbReference type="InterPro" id="IPR020568">
    <property type="entry name" value="Ribosomal_Su5_D2-typ_SF"/>
</dbReference>
<dbReference type="InterPro" id="IPR003029">
    <property type="entry name" value="S1_domain"/>
</dbReference>
<dbReference type="NCBIfam" id="TIGR03591">
    <property type="entry name" value="polynuc_phos"/>
    <property type="match status" value="1"/>
</dbReference>
<dbReference type="NCBIfam" id="TIGR02696">
    <property type="entry name" value="pppGpp_PNP"/>
    <property type="match status" value="1"/>
</dbReference>
<dbReference type="NCBIfam" id="NF008805">
    <property type="entry name" value="PRK11824.1"/>
    <property type="match status" value="1"/>
</dbReference>
<dbReference type="PANTHER" id="PTHR11252">
    <property type="entry name" value="POLYRIBONUCLEOTIDE NUCLEOTIDYLTRANSFERASE"/>
    <property type="match status" value="1"/>
</dbReference>
<dbReference type="PANTHER" id="PTHR11252:SF0">
    <property type="entry name" value="POLYRIBONUCLEOTIDE NUCLEOTIDYLTRANSFERASE 1, MITOCHONDRIAL"/>
    <property type="match status" value="1"/>
</dbReference>
<dbReference type="Pfam" id="PF00013">
    <property type="entry name" value="KH_1"/>
    <property type="match status" value="1"/>
</dbReference>
<dbReference type="Pfam" id="PF03726">
    <property type="entry name" value="PNPase"/>
    <property type="match status" value="1"/>
</dbReference>
<dbReference type="Pfam" id="PF01138">
    <property type="entry name" value="RNase_PH"/>
    <property type="match status" value="2"/>
</dbReference>
<dbReference type="Pfam" id="PF00575">
    <property type="entry name" value="S1"/>
    <property type="match status" value="1"/>
</dbReference>
<dbReference type="PIRSF" id="PIRSF005499">
    <property type="entry name" value="PNPase"/>
    <property type="match status" value="1"/>
</dbReference>
<dbReference type="SMART" id="SM00322">
    <property type="entry name" value="KH"/>
    <property type="match status" value="1"/>
</dbReference>
<dbReference type="SMART" id="SM00316">
    <property type="entry name" value="S1"/>
    <property type="match status" value="1"/>
</dbReference>
<dbReference type="SUPFAM" id="SSF54791">
    <property type="entry name" value="Eukaryotic type KH-domain (KH-domain type I)"/>
    <property type="match status" value="1"/>
</dbReference>
<dbReference type="SUPFAM" id="SSF50249">
    <property type="entry name" value="Nucleic acid-binding proteins"/>
    <property type="match status" value="1"/>
</dbReference>
<dbReference type="SUPFAM" id="SSF46915">
    <property type="entry name" value="Polynucleotide phosphorylase/guanosine pentaphosphate synthase (PNPase/GPSI), domain 3"/>
    <property type="match status" value="1"/>
</dbReference>
<dbReference type="SUPFAM" id="SSF55666">
    <property type="entry name" value="Ribonuclease PH domain 2-like"/>
    <property type="match status" value="2"/>
</dbReference>
<dbReference type="SUPFAM" id="SSF54211">
    <property type="entry name" value="Ribosomal protein S5 domain 2-like"/>
    <property type="match status" value="2"/>
</dbReference>
<dbReference type="PROSITE" id="PS50084">
    <property type="entry name" value="KH_TYPE_1"/>
    <property type="match status" value="1"/>
</dbReference>
<dbReference type="PROSITE" id="PS50126">
    <property type="entry name" value="S1"/>
    <property type="match status" value="1"/>
</dbReference>
<feature type="chain" id="PRO_0000329740" description="Polyribonucleotide nucleotidyltransferase">
    <location>
        <begin position="1"/>
        <end position="764"/>
    </location>
</feature>
<feature type="domain" description="KH" evidence="1">
    <location>
        <begin position="607"/>
        <end position="666"/>
    </location>
</feature>
<feature type="domain" description="S1 motif" evidence="1">
    <location>
        <begin position="678"/>
        <end position="747"/>
    </location>
</feature>
<feature type="binding site" evidence="1">
    <location>
        <position position="541"/>
    </location>
    <ligand>
        <name>Mg(2+)</name>
        <dbReference type="ChEBI" id="CHEBI:18420"/>
    </ligand>
</feature>
<feature type="binding site" evidence="1">
    <location>
        <position position="547"/>
    </location>
    <ligand>
        <name>Mg(2+)</name>
        <dbReference type="ChEBI" id="CHEBI:18420"/>
    </ligand>
</feature>
<gene>
    <name evidence="1" type="primary">pnp</name>
    <name type="ordered locus">NFA_38870</name>
</gene>
<organism>
    <name type="scientific">Nocardia farcinica (strain IFM 10152)</name>
    <dbReference type="NCBI Taxonomy" id="247156"/>
    <lineage>
        <taxon>Bacteria</taxon>
        <taxon>Bacillati</taxon>
        <taxon>Actinomycetota</taxon>
        <taxon>Actinomycetes</taxon>
        <taxon>Mycobacteriales</taxon>
        <taxon>Nocardiaceae</taxon>
        <taxon>Nocardia</taxon>
    </lineage>
</organism>